<organism>
    <name type="scientific">Streptococcus pyogenes serotype M49 (strain NZ131)</name>
    <dbReference type="NCBI Taxonomy" id="471876"/>
    <lineage>
        <taxon>Bacteria</taxon>
        <taxon>Bacillati</taxon>
        <taxon>Bacillota</taxon>
        <taxon>Bacilli</taxon>
        <taxon>Lactobacillales</taxon>
        <taxon>Streptococcaceae</taxon>
        <taxon>Streptococcus</taxon>
    </lineage>
</organism>
<feature type="chain" id="PRO_1000136800" description="Ribosome maturation factor RimP">
    <location>
        <begin position="1"/>
        <end position="178"/>
    </location>
</feature>
<dbReference type="EMBL" id="CP000829">
    <property type="protein sequence ID" value="ACI61619.1"/>
    <property type="molecule type" value="Genomic_DNA"/>
</dbReference>
<dbReference type="SMR" id="B5XHV7"/>
<dbReference type="KEGG" id="soz:Spy49_1341c"/>
<dbReference type="HOGENOM" id="CLU_070525_2_0_9"/>
<dbReference type="Proteomes" id="UP000001039">
    <property type="component" value="Chromosome"/>
</dbReference>
<dbReference type="GO" id="GO:0005829">
    <property type="term" value="C:cytosol"/>
    <property type="evidence" value="ECO:0007669"/>
    <property type="project" value="TreeGrafter"/>
</dbReference>
<dbReference type="GO" id="GO:0000028">
    <property type="term" value="P:ribosomal small subunit assembly"/>
    <property type="evidence" value="ECO:0007669"/>
    <property type="project" value="TreeGrafter"/>
</dbReference>
<dbReference type="GO" id="GO:0006412">
    <property type="term" value="P:translation"/>
    <property type="evidence" value="ECO:0007669"/>
    <property type="project" value="TreeGrafter"/>
</dbReference>
<dbReference type="CDD" id="cd01734">
    <property type="entry name" value="YlxS_C"/>
    <property type="match status" value="1"/>
</dbReference>
<dbReference type="Gene3D" id="2.30.30.180">
    <property type="entry name" value="Ribosome maturation factor RimP, C-terminal domain"/>
    <property type="match status" value="1"/>
</dbReference>
<dbReference type="Gene3D" id="3.30.300.70">
    <property type="entry name" value="RimP-like superfamily, N-terminal"/>
    <property type="match status" value="1"/>
</dbReference>
<dbReference type="HAMAP" id="MF_01077">
    <property type="entry name" value="RimP"/>
    <property type="match status" value="1"/>
</dbReference>
<dbReference type="InterPro" id="IPR003728">
    <property type="entry name" value="Ribosome_maturation_RimP"/>
</dbReference>
<dbReference type="InterPro" id="IPR028998">
    <property type="entry name" value="RimP_C"/>
</dbReference>
<dbReference type="InterPro" id="IPR036847">
    <property type="entry name" value="RimP_C_sf"/>
</dbReference>
<dbReference type="InterPro" id="IPR028989">
    <property type="entry name" value="RimP_N"/>
</dbReference>
<dbReference type="InterPro" id="IPR035956">
    <property type="entry name" value="RimP_N_sf"/>
</dbReference>
<dbReference type="NCBIfam" id="NF000928">
    <property type="entry name" value="PRK00092.1-2"/>
    <property type="match status" value="1"/>
</dbReference>
<dbReference type="PANTHER" id="PTHR33867">
    <property type="entry name" value="RIBOSOME MATURATION FACTOR RIMP"/>
    <property type="match status" value="1"/>
</dbReference>
<dbReference type="PANTHER" id="PTHR33867:SF1">
    <property type="entry name" value="RIBOSOME MATURATION FACTOR RIMP"/>
    <property type="match status" value="1"/>
</dbReference>
<dbReference type="Pfam" id="PF17384">
    <property type="entry name" value="DUF150_C"/>
    <property type="match status" value="1"/>
</dbReference>
<dbReference type="Pfam" id="PF02576">
    <property type="entry name" value="RimP_N"/>
    <property type="match status" value="1"/>
</dbReference>
<dbReference type="SUPFAM" id="SSF74942">
    <property type="entry name" value="YhbC-like, C-terminal domain"/>
    <property type="match status" value="1"/>
</dbReference>
<dbReference type="SUPFAM" id="SSF75420">
    <property type="entry name" value="YhbC-like, N-terminal domain"/>
    <property type="match status" value="1"/>
</dbReference>
<comment type="function">
    <text evidence="1">Required for maturation of 30S ribosomal subunits.</text>
</comment>
<comment type="subcellular location">
    <subcellularLocation>
        <location evidence="1">Cytoplasm</location>
    </subcellularLocation>
</comment>
<comment type="similarity">
    <text evidence="1">Belongs to the RimP family.</text>
</comment>
<protein>
    <recommendedName>
        <fullName evidence="1">Ribosome maturation factor RimP</fullName>
    </recommendedName>
</protein>
<keyword id="KW-0963">Cytoplasm</keyword>
<keyword id="KW-0690">Ribosome biogenesis</keyword>
<sequence>MDSQGPIILEKSIKIEEVIKIANTSIIDIVTKTVTPEIKAPYELVDVEYDKMGSDYILSILVDKEGGITVEDTSDLTNIISPLLDTIDPDPFPNQYMLEVSSPGLERPLKTADSLKAAVGSYINVSLYQAIDKVKVFQGDLLAFDGETLTIDYLDKTRHKIVNIPYQAVAKVRMAVKL</sequence>
<reference key="1">
    <citation type="journal article" date="2008" name="J. Bacteriol.">
        <title>Genome sequence of a nephritogenic and highly transformable M49 strain of Streptococcus pyogenes.</title>
        <authorList>
            <person name="McShan W.M."/>
            <person name="Ferretti J.J."/>
            <person name="Karasawa T."/>
            <person name="Suvorov A.N."/>
            <person name="Lin S."/>
            <person name="Qin B."/>
            <person name="Jia H."/>
            <person name="Kenton S."/>
            <person name="Najar F."/>
            <person name="Wu H."/>
            <person name="Scott J."/>
            <person name="Roe B.A."/>
            <person name="Savic D.J."/>
        </authorList>
    </citation>
    <scope>NUCLEOTIDE SEQUENCE [LARGE SCALE GENOMIC DNA]</scope>
    <source>
        <strain>NZ131</strain>
    </source>
</reference>
<proteinExistence type="inferred from homology"/>
<name>RIMP_STRPZ</name>
<evidence type="ECO:0000255" key="1">
    <source>
        <dbReference type="HAMAP-Rule" id="MF_01077"/>
    </source>
</evidence>
<accession>B5XHV7</accession>
<gene>
    <name evidence="1" type="primary">rimP</name>
    <name type="ordered locus">Spy49_1341c</name>
</gene>